<proteinExistence type="uncertain"/>
<comment type="alternative products">
    <event type="alternative splicing"/>
    <isoform>
        <id>B1AH88-1</id>
        <name>2</name>
        <name>PBR-S</name>
        <sequence type="displayed"/>
    </isoform>
    <isoform>
        <id>P30536-1</id>
        <name>1</name>
        <sequence type="external"/>
    </isoform>
</comment>
<comment type="tissue specificity">
    <text>Ubiquitous.</text>
</comment>
<comment type="miscellaneous">
    <molecule>Isoform 2</molecule>
    <text>The relatively low levels of the corresponding mRNA suggest that it might represent errors of the splicing machinery. In addition, isoform 2 is derived from a different reading frame, compared to isoform 1 and lacks homolog support.</text>
</comment>
<comment type="caution">
    <text evidence="4">Product of a dubious CDS prediction.</text>
</comment>
<feature type="chain" id="PRO_0000379595" description="Putative peripheral benzodiazepine receptor-related protein">
    <location>
        <begin position="1"/>
        <end position="102"/>
    </location>
</feature>
<feature type="sequence variant" id="VAR_059840" description="In dbSNP:rs6971." evidence="1 2 3">
    <original>H</original>
    <variation>R</variation>
    <location>
        <position position="53"/>
    </location>
</feature>
<feature type="sequence conflict" description="In Ref. 2; CAG33288." evidence="4" ref="2">
    <original>G</original>
    <variation>S</variation>
    <location>
        <position position="26"/>
    </location>
</feature>
<reference key="1">
    <citation type="journal article" date="1993" name="Genomics">
        <title>The human peripheral benzodiazepine receptor gene: cloning and characterization of alternative splicing in normal tissues and in a patient with congenital lipoid adrenal hyperplasia.</title>
        <authorList>
            <person name="Lin D."/>
            <person name="Chang Y.J."/>
            <person name="Strauss J.F."/>
            <person name="Miller W.L."/>
        </authorList>
    </citation>
    <scope>NUCLEOTIDE SEQUENCE [MRNA] (ISOFORM 2)</scope>
    <scope>VARIANT ARG-53</scope>
    <source>
        <tissue>Placenta</tissue>
    </source>
</reference>
<reference key="2">
    <citation type="submission" date="2004-06" db="EMBL/GenBank/DDBJ databases">
        <title>Cloning of human full open reading frames in Gateway(TM) system entry vector (pDONR201).</title>
        <authorList>
            <person name="Ebert L."/>
            <person name="Schick M."/>
            <person name="Neubert P."/>
            <person name="Schatten R."/>
            <person name="Henze S."/>
            <person name="Korn B."/>
        </authorList>
    </citation>
    <scope>NUCLEOTIDE SEQUENCE [LARGE SCALE MRNA] (ISOFORM 2)</scope>
    <scope>VARIANT ARG-53</scope>
</reference>
<reference key="3">
    <citation type="journal article" date="1999" name="Nature">
        <title>The DNA sequence of human chromosome 22.</title>
        <authorList>
            <person name="Dunham I."/>
            <person name="Hunt A.R."/>
            <person name="Collins J.E."/>
            <person name="Bruskiewich R."/>
            <person name="Beare D.M."/>
            <person name="Clamp M."/>
            <person name="Smink L.J."/>
            <person name="Ainscough R."/>
            <person name="Almeida J.P."/>
            <person name="Babbage A.K."/>
            <person name="Bagguley C."/>
            <person name="Bailey J."/>
            <person name="Barlow K.F."/>
            <person name="Bates K.N."/>
            <person name="Beasley O.P."/>
            <person name="Bird C.P."/>
            <person name="Blakey S.E."/>
            <person name="Bridgeman A.M."/>
            <person name="Buck D."/>
            <person name="Burgess J."/>
            <person name="Burrill W.D."/>
            <person name="Burton J."/>
            <person name="Carder C."/>
            <person name="Carter N.P."/>
            <person name="Chen Y."/>
            <person name="Clark G."/>
            <person name="Clegg S.M."/>
            <person name="Cobley V.E."/>
            <person name="Cole C.G."/>
            <person name="Collier R.E."/>
            <person name="Connor R."/>
            <person name="Conroy D."/>
            <person name="Corby N.R."/>
            <person name="Coville G.J."/>
            <person name="Cox A.V."/>
            <person name="Davis J."/>
            <person name="Dawson E."/>
            <person name="Dhami P.D."/>
            <person name="Dockree C."/>
            <person name="Dodsworth S.J."/>
            <person name="Durbin R.M."/>
            <person name="Ellington A.G."/>
            <person name="Evans K.L."/>
            <person name="Fey J.M."/>
            <person name="Fleming K."/>
            <person name="French L."/>
            <person name="Garner A.A."/>
            <person name="Gilbert J.G.R."/>
            <person name="Goward M.E."/>
            <person name="Grafham D.V."/>
            <person name="Griffiths M.N.D."/>
            <person name="Hall C."/>
            <person name="Hall R.E."/>
            <person name="Hall-Tamlyn G."/>
            <person name="Heathcott R.W."/>
            <person name="Ho S."/>
            <person name="Holmes S."/>
            <person name="Hunt S.E."/>
            <person name="Jones M.C."/>
            <person name="Kershaw J."/>
            <person name="Kimberley A.M."/>
            <person name="King A."/>
            <person name="Laird G.K."/>
            <person name="Langford C.F."/>
            <person name="Leversha M.A."/>
            <person name="Lloyd C."/>
            <person name="Lloyd D.M."/>
            <person name="Martyn I.D."/>
            <person name="Mashreghi-Mohammadi M."/>
            <person name="Matthews L.H."/>
            <person name="Mccann O.T."/>
            <person name="Mcclay J."/>
            <person name="Mclaren S."/>
            <person name="McMurray A.A."/>
            <person name="Milne S.A."/>
            <person name="Mortimore B.J."/>
            <person name="Odell C.N."/>
            <person name="Pavitt R."/>
            <person name="Pearce A.V."/>
            <person name="Pearson D."/>
            <person name="Phillimore B.J.C.T."/>
            <person name="Phillips S.H."/>
            <person name="Plumb R.W."/>
            <person name="Ramsay H."/>
            <person name="Ramsey Y."/>
            <person name="Rogers L."/>
            <person name="Ross M.T."/>
            <person name="Scott C.E."/>
            <person name="Sehra H.K."/>
            <person name="Skuce C.D."/>
            <person name="Smalley S."/>
            <person name="Smith M.L."/>
            <person name="Soderlund C."/>
            <person name="Spragon L."/>
            <person name="Steward C.A."/>
            <person name="Sulston J.E."/>
            <person name="Swann R.M."/>
            <person name="Vaudin M."/>
            <person name="Wall M."/>
            <person name="Wallis J.M."/>
            <person name="Whiteley M.N."/>
            <person name="Willey D.L."/>
            <person name="Williams L."/>
            <person name="Williams S.A."/>
            <person name="Williamson H."/>
            <person name="Wilmer T.E."/>
            <person name="Wilming L."/>
            <person name="Wright C.L."/>
            <person name="Hubbard T."/>
            <person name="Bentley D.R."/>
            <person name="Beck S."/>
            <person name="Rogers J."/>
            <person name="Shimizu N."/>
            <person name="Minoshima S."/>
            <person name="Kawasaki K."/>
            <person name="Sasaki T."/>
            <person name="Asakawa S."/>
            <person name="Kudoh J."/>
            <person name="Shintani A."/>
            <person name="Shibuya K."/>
            <person name="Yoshizaki Y."/>
            <person name="Aoki N."/>
            <person name="Mitsuyama S."/>
            <person name="Roe B.A."/>
            <person name="Chen F."/>
            <person name="Chu L."/>
            <person name="Crabtree J."/>
            <person name="Deschamps S."/>
            <person name="Do A."/>
            <person name="Do T."/>
            <person name="Dorman A."/>
            <person name="Fang F."/>
            <person name="Fu Y."/>
            <person name="Hu P."/>
            <person name="Hua A."/>
            <person name="Kenton S."/>
            <person name="Lai H."/>
            <person name="Lao H.I."/>
            <person name="Lewis J."/>
            <person name="Lewis S."/>
            <person name="Lin S.-P."/>
            <person name="Loh P."/>
            <person name="Malaj E."/>
            <person name="Nguyen T."/>
            <person name="Pan H."/>
            <person name="Phan S."/>
            <person name="Qi S."/>
            <person name="Qian Y."/>
            <person name="Ray L."/>
            <person name="Ren Q."/>
            <person name="Shaull S."/>
            <person name="Sloan D."/>
            <person name="Song L."/>
            <person name="Wang Q."/>
            <person name="Wang Y."/>
            <person name="Wang Z."/>
            <person name="White J."/>
            <person name="Willingham D."/>
            <person name="Wu H."/>
            <person name="Yao Z."/>
            <person name="Zhan M."/>
            <person name="Zhang G."/>
            <person name="Chissoe S."/>
            <person name="Murray J."/>
            <person name="Miller N."/>
            <person name="Minx P."/>
            <person name="Fulton R."/>
            <person name="Johnson D."/>
            <person name="Bemis G."/>
            <person name="Bentley D."/>
            <person name="Bradshaw H."/>
            <person name="Bourne S."/>
            <person name="Cordes M."/>
            <person name="Du Z."/>
            <person name="Fulton L."/>
            <person name="Goela D."/>
            <person name="Graves T."/>
            <person name="Hawkins J."/>
            <person name="Hinds K."/>
            <person name="Kemp K."/>
            <person name="Latreille P."/>
            <person name="Layman D."/>
            <person name="Ozersky P."/>
            <person name="Rohlfing T."/>
            <person name="Scheet P."/>
            <person name="Walker C."/>
            <person name="Wamsley A."/>
            <person name="Wohldmann P."/>
            <person name="Pepin K."/>
            <person name="Nelson J."/>
            <person name="Korf I."/>
            <person name="Bedell J.A."/>
            <person name="Hillier L.W."/>
            <person name="Mardis E."/>
            <person name="Waterston R."/>
            <person name="Wilson R."/>
            <person name="Emanuel B.S."/>
            <person name="Shaikh T."/>
            <person name="Kurahashi H."/>
            <person name="Saitta S."/>
            <person name="Budarf M.L."/>
            <person name="McDermid H.E."/>
            <person name="Johnson A."/>
            <person name="Wong A.C.C."/>
            <person name="Morrow B.E."/>
            <person name="Edelmann L."/>
            <person name="Kim U.J."/>
            <person name="Shizuya H."/>
            <person name="Simon M.I."/>
            <person name="Dumanski J.P."/>
            <person name="Peyrard M."/>
            <person name="Kedra D."/>
            <person name="Seroussi E."/>
            <person name="Fransson I."/>
            <person name="Tapia I."/>
            <person name="Bruder C.E."/>
            <person name="O'Brien K.P."/>
            <person name="Wilkinson P."/>
            <person name="Bodenteich A."/>
            <person name="Hartman K."/>
            <person name="Hu X."/>
            <person name="Khan A.S."/>
            <person name="Lane L."/>
            <person name="Tilahun Y."/>
            <person name="Wright H."/>
        </authorList>
    </citation>
    <scope>NUCLEOTIDE SEQUENCE [LARGE SCALE GENOMIC DNA]</scope>
</reference>
<reference key="4">
    <citation type="submission" date="2005-07" db="EMBL/GenBank/DDBJ databases">
        <authorList>
            <person name="Mural R.J."/>
            <person name="Istrail S."/>
            <person name="Sutton G.G."/>
            <person name="Florea L."/>
            <person name="Halpern A.L."/>
            <person name="Mobarry C.M."/>
            <person name="Lippert R."/>
            <person name="Walenz B."/>
            <person name="Shatkay H."/>
            <person name="Dew I."/>
            <person name="Miller J.R."/>
            <person name="Flanigan M.J."/>
            <person name="Edwards N.J."/>
            <person name="Bolanos R."/>
            <person name="Fasulo D."/>
            <person name="Halldorsson B.V."/>
            <person name="Hannenhalli S."/>
            <person name="Turner R."/>
            <person name="Yooseph S."/>
            <person name="Lu F."/>
            <person name="Nusskern D.R."/>
            <person name="Shue B.C."/>
            <person name="Zheng X.H."/>
            <person name="Zhong F."/>
            <person name="Delcher A.L."/>
            <person name="Huson D.H."/>
            <person name="Kravitz S.A."/>
            <person name="Mouchard L."/>
            <person name="Reinert K."/>
            <person name="Remington K.A."/>
            <person name="Clark A.G."/>
            <person name="Waterman M.S."/>
            <person name="Eichler E.E."/>
            <person name="Adams M.D."/>
            <person name="Hunkapiller M.W."/>
            <person name="Myers E.W."/>
            <person name="Venter J.C."/>
        </authorList>
    </citation>
    <scope>NUCLEOTIDE SEQUENCE [LARGE SCALE GENOMIC DNA]</scope>
    <scope>VARIANT ARG-53</scope>
</reference>
<keyword id="KW-0025">Alternative splicing</keyword>
<keyword id="KW-1185">Reference proteome</keyword>
<protein>
    <recommendedName>
        <fullName>Putative peripheral benzodiazepine receptor-related protein</fullName>
    </recommendedName>
</protein>
<organism>
    <name type="scientific">Homo sapiens</name>
    <name type="common">Human</name>
    <dbReference type="NCBI Taxonomy" id="9606"/>
    <lineage>
        <taxon>Eukaryota</taxon>
        <taxon>Metazoa</taxon>
        <taxon>Chordata</taxon>
        <taxon>Craniata</taxon>
        <taxon>Vertebrata</taxon>
        <taxon>Euteleostomi</taxon>
        <taxon>Mammalia</taxon>
        <taxon>Eutheria</taxon>
        <taxon>Euarchontoglires</taxon>
        <taxon>Primates</taxon>
        <taxon>Haplorrhini</taxon>
        <taxon>Catarrhini</taxon>
        <taxon>Hominidae</taxon>
        <taxon>Homo</taxon>
    </lineage>
</organism>
<sequence>MAPHLLWCPTNGLGLGGSPAGQWGGGSHYRGLVPGEPAGRPPALPLPGLAGLHDHTQLLRMAGQPWLAWGTAAARVSARPTRDCSCTSRCHHACDVVAVTLS</sequence>
<dbReference type="EMBL" id="L21950">
    <property type="protein sequence ID" value="AAA18227.1"/>
    <property type="molecule type" value="mRNA"/>
</dbReference>
<dbReference type="EMBL" id="CR457007">
    <property type="protein sequence ID" value="CAG33288.1"/>
    <property type="molecule type" value="mRNA"/>
</dbReference>
<dbReference type="EMBL" id="Z82214">
    <property type="status" value="NOT_ANNOTATED_CDS"/>
    <property type="molecule type" value="Genomic_DNA"/>
</dbReference>
<dbReference type="EMBL" id="CH471138">
    <property type="protein sequence ID" value="EAW73290.1"/>
    <property type="molecule type" value="Genomic_DNA"/>
</dbReference>
<dbReference type="PIR" id="A49361">
    <property type="entry name" value="A49361"/>
</dbReference>
<dbReference type="BindingDB" id="B1AH88"/>
<dbReference type="iPTMnet" id="B1AH88"/>
<dbReference type="BioMuta" id="TSPO"/>
<dbReference type="ProteomicsDB" id="2911">
    <molecule id="B1AH88-1"/>
</dbReference>
<dbReference type="Antibodypedia" id="27480">
    <property type="antibodies" value="299 antibodies from 40 providers"/>
</dbReference>
<dbReference type="DNASU" id="706"/>
<dbReference type="AGR" id="HGNC:1158"/>
<dbReference type="GeneCards" id="TSPO"/>
<dbReference type="HGNC" id="HGNC:1158">
    <property type="gene designation" value="TSPO"/>
</dbReference>
<dbReference type="neXtProt" id="NX_B1AH88"/>
<dbReference type="PharmGKB" id="PA25473"/>
<dbReference type="VEuPathDB" id="HostDB:ENSG00000100300"/>
<dbReference type="OrthoDB" id="8841220at2759"/>
<dbReference type="PathwayCommons" id="B1AH88"/>
<dbReference type="ChiTaRS" id="TSPO">
    <property type="organism name" value="human"/>
</dbReference>
<dbReference type="Pharos" id="B1AH88">
    <property type="development level" value="Tchem"/>
</dbReference>
<dbReference type="Proteomes" id="UP000005640">
    <property type="component" value="Chromosome 22"/>
</dbReference>
<dbReference type="Bgee" id="ENSG00000100300">
    <property type="expression patterns" value="Expressed in lower esophagus mucosa and 193 other cell types or tissues"/>
</dbReference>
<dbReference type="ExpressionAtlas" id="B1AH88">
    <property type="expression patterns" value="baseline and differential"/>
</dbReference>
<dbReference type="GO" id="GO:0005739">
    <property type="term" value="C:mitochondrion"/>
    <property type="evidence" value="ECO:0006056"/>
    <property type="project" value="FlyBase"/>
</dbReference>
<evidence type="ECO:0000269" key="1">
    <source>
    </source>
</evidence>
<evidence type="ECO:0000269" key="2">
    <source ref="2"/>
</evidence>
<evidence type="ECO:0000269" key="3">
    <source ref="4"/>
</evidence>
<evidence type="ECO:0000305" key="4"/>
<accession>B1AH88</accession>
<accession>Q13849</accession>
<accession>Q6IAZ7</accession>
<name>TSPOB_HUMAN</name>
<gene>
    <name type="primary">TSPO</name>
    <name type="synonym">PBRS</name>
</gene>